<reference key="1">
    <citation type="journal article" date="2011" name="Stand. Genomic Sci.">
        <title>Complete genome sequence of the filamentous gliding predatory bacterium Herpetosiphon aurantiacus type strain (114-95(T)).</title>
        <authorList>
            <person name="Kiss H."/>
            <person name="Nett M."/>
            <person name="Domin N."/>
            <person name="Martin K."/>
            <person name="Maresca J.A."/>
            <person name="Copeland A."/>
            <person name="Lapidus A."/>
            <person name="Lucas S."/>
            <person name="Berry K.W."/>
            <person name="Glavina Del Rio T."/>
            <person name="Dalin E."/>
            <person name="Tice H."/>
            <person name="Pitluck S."/>
            <person name="Richardson P."/>
            <person name="Bruce D."/>
            <person name="Goodwin L."/>
            <person name="Han C."/>
            <person name="Detter J.C."/>
            <person name="Schmutz J."/>
            <person name="Brettin T."/>
            <person name="Land M."/>
            <person name="Hauser L."/>
            <person name="Kyrpides N.C."/>
            <person name="Ivanova N."/>
            <person name="Goeker M."/>
            <person name="Woyke T."/>
            <person name="Klenk H.P."/>
            <person name="Bryant D.A."/>
        </authorList>
    </citation>
    <scope>NUCLEOTIDE SEQUENCE [LARGE SCALE GENOMIC DNA]</scope>
    <source>
        <strain>ATCC 23779 / DSM 785 / 114-95</strain>
    </source>
</reference>
<feature type="chain" id="PRO_1000096432" description="dCTP deaminase">
    <location>
        <begin position="1"/>
        <end position="184"/>
    </location>
</feature>
<feature type="active site" description="Proton donor/acceptor" evidence="1">
    <location>
        <position position="133"/>
    </location>
</feature>
<feature type="binding site" evidence="1">
    <location>
        <begin position="107"/>
        <end position="112"/>
    </location>
    <ligand>
        <name>dCTP</name>
        <dbReference type="ChEBI" id="CHEBI:61481"/>
    </ligand>
</feature>
<feature type="binding site" evidence="1">
    <location>
        <position position="152"/>
    </location>
    <ligand>
        <name>dCTP</name>
        <dbReference type="ChEBI" id="CHEBI:61481"/>
    </ligand>
</feature>
<feature type="binding site" evidence="1">
    <location>
        <position position="166"/>
    </location>
    <ligand>
        <name>dCTP</name>
        <dbReference type="ChEBI" id="CHEBI:61481"/>
    </ligand>
</feature>
<feature type="binding site" evidence="1">
    <location>
        <position position="176"/>
    </location>
    <ligand>
        <name>dCTP</name>
        <dbReference type="ChEBI" id="CHEBI:61481"/>
    </ligand>
</feature>
<proteinExistence type="inferred from homology"/>
<dbReference type="EC" id="3.5.4.13" evidence="1"/>
<dbReference type="EMBL" id="CP000875">
    <property type="protein sequence ID" value="ABX03962.1"/>
    <property type="molecule type" value="Genomic_DNA"/>
</dbReference>
<dbReference type="SMR" id="A9B2B7"/>
<dbReference type="STRING" id="316274.Haur_1314"/>
<dbReference type="KEGG" id="hau:Haur_1314"/>
<dbReference type="eggNOG" id="COG0717">
    <property type="taxonomic scope" value="Bacteria"/>
</dbReference>
<dbReference type="HOGENOM" id="CLU_087476_4_0_0"/>
<dbReference type="InParanoid" id="A9B2B7"/>
<dbReference type="UniPathway" id="UPA00610">
    <property type="reaction ID" value="UER00665"/>
</dbReference>
<dbReference type="Proteomes" id="UP000000787">
    <property type="component" value="Chromosome"/>
</dbReference>
<dbReference type="GO" id="GO:0008829">
    <property type="term" value="F:dCTP deaminase activity"/>
    <property type="evidence" value="ECO:0007669"/>
    <property type="project" value="UniProtKB-UniRule"/>
</dbReference>
<dbReference type="GO" id="GO:0000166">
    <property type="term" value="F:nucleotide binding"/>
    <property type="evidence" value="ECO:0007669"/>
    <property type="project" value="UniProtKB-KW"/>
</dbReference>
<dbReference type="GO" id="GO:0006226">
    <property type="term" value="P:dUMP biosynthetic process"/>
    <property type="evidence" value="ECO:0007669"/>
    <property type="project" value="UniProtKB-UniPathway"/>
</dbReference>
<dbReference type="GO" id="GO:0006229">
    <property type="term" value="P:dUTP biosynthetic process"/>
    <property type="evidence" value="ECO:0007669"/>
    <property type="project" value="UniProtKB-UniRule"/>
</dbReference>
<dbReference type="GO" id="GO:0015949">
    <property type="term" value="P:nucleobase-containing small molecule interconversion"/>
    <property type="evidence" value="ECO:0007669"/>
    <property type="project" value="TreeGrafter"/>
</dbReference>
<dbReference type="CDD" id="cd07557">
    <property type="entry name" value="trimeric_dUTPase"/>
    <property type="match status" value="1"/>
</dbReference>
<dbReference type="FunFam" id="2.70.40.10:FF:000001">
    <property type="entry name" value="dCTP deaminase"/>
    <property type="match status" value="1"/>
</dbReference>
<dbReference type="Gene3D" id="2.70.40.10">
    <property type="match status" value="1"/>
</dbReference>
<dbReference type="HAMAP" id="MF_00146">
    <property type="entry name" value="dCTP_deaminase"/>
    <property type="match status" value="1"/>
</dbReference>
<dbReference type="InterPro" id="IPR011962">
    <property type="entry name" value="dCTP_deaminase"/>
</dbReference>
<dbReference type="InterPro" id="IPR036157">
    <property type="entry name" value="dUTPase-like_sf"/>
</dbReference>
<dbReference type="InterPro" id="IPR033704">
    <property type="entry name" value="dUTPase_trimeric"/>
</dbReference>
<dbReference type="NCBIfam" id="TIGR02274">
    <property type="entry name" value="dCTP_deam"/>
    <property type="match status" value="1"/>
</dbReference>
<dbReference type="PANTHER" id="PTHR42680">
    <property type="entry name" value="DCTP DEAMINASE"/>
    <property type="match status" value="1"/>
</dbReference>
<dbReference type="PANTHER" id="PTHR42680:SF3">
    <property type="entry name" value="DCTP DEAMINASE"/>
    <property type="match status" value="1"/>
</dbReference>
<dbReference type="Pfam" id="PF22769">
    <property type="entry name" value="DCD"/>
    <property type="match status" value="1"/>
</dbReference>
<dbReference type="SUPFAM" id="SSF51283">
    <property type="entry name" value="dUTPase-like"/>
    <property type="match status" value="1"/>
</dbReference>
<protein>
    <recommendedName>
        <fullName evidence="1">dCTP deaminase</fullName>
        <ecNumber evidence="1">3.5.4.13</ecNumber>
    </recommendedName>
    <alternativeName>
        <fullName evidence="1">Deoxycytidine triphosphate deaminase</fullName>
    </alternativeName>
</protein>
<sequence length="184" mass="20558">MSIKADRWIKRMAQEHGMIEPFVDGQVRGGVVSYGLSSYGYDIRIADEFKIFTNVNSAIIDPKNFDPRSFVDVKADVCIIPPNSFVLCRTIEYFRIPRNVLCVCVGKSTYARCGLIANVTPFEPGWEGYVTIEISNTTPLPAKIYANEGIAQVLFFEGDELPDVAYDDRSGKYQGQTGVTLPRI</sequence>
<keyword id="KW-0378">Hydrolase</keyword>
<keyword id="KW-0546">Nucleotide metabolism</keyword>
<keyword id="KW-0547">Nucleotide-binding</keyword>
<evidence type="ECO:0000255" key="1">
    <source>
        <dbReference type="HAMAP-Rule" id="MF_00146"/>
    </source>
</evidence>
<name>DCD_HERA2</name>
<comment type="function">
    <text evidence="1">Catalyzes the deamination of dCTP to dUTP.</text>
</comment>
<comment type="catalytic activity">
    <reaction evidence="1">
        <text>dCTP + H2O + H(+) = dUTP + NH4(+)</text>
        <dbReference type="Rhea" id="RHEA:22680"/>
        <dbReference type="ChEBI" id="CHEBI:15377"/>
        <dbReference type="ChEBI" id="CHEBI:15378"/>
        <dbReference type="ChEBI" id="CHEBI:28938"/>
        <dbReference type="ChEBI" id="CHEBI:61481"/>
        <dbReference type="ChEBI" id="CHEBI:61555"/>
        <dbReference type="EC" id="3.5.4.13"/>
    </reaction>
</comment>
<comment type="pathway">
    <text evidence="1">Pyrimidine metabolism; dUMP biosynthesis; dUMP from dCTP (dUTP route): step 1/2.</text>
</comment>
<comment type="subunit">
    <text evidence="1">Homotrimer.</text>
</comment>
<comment type="similarity">
    <text evidence="1">Belongs to the dCTP deaminase family.</text>
</comment>
<organism>
    <name type="scientific">Herpetosiphon aurantiacus (strain ATCC 23779 / DSM 785 / 114-95)</name>
    <dbReference type="NCBI Taxonomy" id="316274"/>
    <lineage>
        <taxon>Bacteria</taxon>
        <taxon>Bacillati</taxon>
        <taxon>Chloroflexota</taxon>
        <taxon>Chloroflexia</taxon>
        <taxon>Herpetosiphonales</taxon>
        <taxon>Herpetosiphonaceae</taxon>
        <taxon>Herpetosiphon</taxon>
    </lineage>
</organism>
<accession>A9B2B7</accession>
<gene>
    <name evidence="1" type="primary">dcd</name>
    <name type="ordered locus">Haur_1314</name>
</gene>